<keyword id="KW-0002">3D-structure</keyword>
<keyword id="KW-1015">Disulfide bond</keyword>
<keyword id="KW-0325">Glycoprotein</keyword>
<keyword id="KW-0378">Hydrolase</keyword>
<keyword id="KW-0472">Membrane</keyword>
<keyword id="KW-0520">NAD</keyword>
<keyword id="KW-0521">NADP</keyword>
<keyword id="KW-1185">Reference proteome</keyword>
<keyword id="KW-0735">Signal-anchor</keyword>
<keyword id="KW-0808">Transferase</keyword>
<keyword id="KW-0812">Transmembrane</keyword>
<keyword id="KW-1133">Transmembrane helix</keyword>
<organism>
    <name type="scientific">Mus musculus</name>
    <name type="common">Mouse</name>
    <dbReference type="NCBI Taxonomy" id="10090"/>
    <lineage>
        <taxon>Eukaryota</taxon>
        <taxon>Metazoa</taxon>
        <taxon>Chordata</taxon>
        <taxon>Craniata</taxon>
        <taxon>Vertebrata</taxon>
        <taxon>Euteleostomi</taxon>
        <taxon>Mammalia</taxon>
        <taxon>Eutheria</taxon>
        <taxon>Euarchontoglires</taxon>
        <taxon>Glires</taxon>
        <taxon>Rodentia</taxon>
        <taxon>Myomorpha</taxon>
        <taxon>Muroidea</taxon>
        <taxon>Muridae</taxon>
        <taxon>Murinae</taxon>
        <taxon>Mus</taxon>
        <taxon>Mus</taxon>
    </lineage>
</organism>
<comment type="function">
    <text evidence="1 2 4">Synthesizes the second messengers cyclic ADP-ribose (cADPR) and nicotinate-adenine dinucleotide phosphate (NAADP), the former a second messenger for glucose-induced insulin secretion, the latter a Ca(2+) mobilizer (PubMed:11829748). Also has cADPR hydrolase activity (By similarity).</text>
</comment>
<comment type="catalytic activity">
    <reaction evidence="4">
        <text>NAD(+) = cyclic ADP-beta-D-ribose + nicotinamide + H(+)</text>
        <dbReference type="Rhea" id="RHEA:38611"/>
        <dbReference type="ChEBI" id="CHEBI:15378"/>
        <dbReference type="ChEBI" id="CHEBI:17154"/>
        <dbReference type="ChEBI" id="CHEBI:57540"/>
        <dbReference type="ChEBI" id="CHEBI:73672"/>
    </reaction>
</comment>
<comment type="catalytic activity">
    <reaction evidence="4">
        <text>nicotinate + NADP(+) = nicotinate-adenine dinucleotide phosphate + nicotinamide</text>
        <dbReference type="Rhea" id="RHEA:38599"/>
        <dbReference type="ChEBI" id="CHEBI:17154"/>
        <dbReference type="ChEBI" id="CHEBI:32544"/>
        <dbReference type="ChEBI" id="CHEBI:58349"/>
        <dbReference type="ChEBI" id="CHEBI:75967"/>
        <dbReference type="EC" id="2.4.99.20"/>
    </reaction>
</comment>
<comment type="catalytic activity">
    <reaction>
        <text>NAD(+) + H2O = ADP-D-ribose + nicotinamide + H(+)</text>
        <dbReference type="Rhea" id="RHEA:16301"/>
        <dbReference type="ChEBI" id="CHEBI:15377"/>
        <dbReference type="ChEBI" id="CHEBI:15378"/>
        <dbReference type="ChEBI" id="CHEBI:17154"/>
        <dbReference type="ChEBI" id="CHEBI:57540"/>
        <dbReference type="ChEBI" id="CHEBI:57967"/>
        <dbReference type="EC" id="3.2.2.6"/>
    </reaction>
</comment>
<comment type="subunit">
    <text evidence="2">Homodimer.</text>
</comment>
<comment type="interaction">
    <interactant intactId="EBI-8401721">
        <id>P56528</id>
    </interactant>
    <interactant intactId="EBI-8401721">
        <id>P56528</id>
        <label>Cd38</label>
    </interactant>
    <organismsDiffer>false</organismsDiffer>
    <experiments>5</experiments>
</comment>
<comment type="subcellular location">
    <subcellularLocation>
        <location evidence="8 9">Membrane</location>
        <topology evidence="9">Single-pass type II membrane protein</topology>
    </subcellularLocation>
</comment>
<comment type="disruption phenotype">
    <text evidence="4">Loss of cADPR and NAADP synthesis.</text>
</comment>
<comment type="similarity">
    <text evidence="7">Belongs to the ADP-ribosyl cyclase family.</text>
</comment>
<gene>
    <name type="primary">Cd38</name>
</gene>
<dbReference type="EC" id="3.2.2.-" evidence="4"/>
<dbReference type="EC" id="3.2.2.6"/>
<dbReference type="EC" id="2.4.99.20" evidence="4"/>
<dbReference type="EMBL" id="L11332">
    <property type="protein sequence ID" value="AAA03163.1"/>
    <property type="molecule type" value="mRNA"/>
</dbReference>
<dbReference type="EMBL" id="AK038439">
    <property type="protein sequence ID" value="BAC30000.1"/>
    <property type="molecule type" value="mRNA"/>
</dbReference>
<dbReference type="EMBL" id="AK040498">
    <property type="protein sequence ID" value="BAC30607.1"/>
    <property type="molecule type" value="mRNA"/>
</dbReference>
<dbReference type="EMBL" id="AK042970">
    <property type="protein sequence ID" value="BAC31423.1"/>
    <property type="molecule type" value="mRNA"/>
</dbReference>
<dbReference type="EMBL" id="BC046312">
    <property type="protein sequence ID" value="AAH46312.1"/>
    <property type="molecule type" value="mRNA"/>
</dbReference>
<dbReference type="CCDS" id="CCDS19265.1"/>
<dbReference type="PIR" id="I49586">
    <property type="entry name" value="I49586"/>
</dbReference>
<dbReference type="RefSeq" id="NP_031672.2">
    <property type="nucleotide sequence ID" value="NM_007646.5"/>
</dbReference>
<dbReference type="PDB" id="2EG9">
    <property type="method" value="X-ray"/>
    <property type="resolution" value="2.80 A"/>
    <property type="chains" value="A/B=48-288"/>
</dbReference>
<dbReference type="PDBsum" id="2EG9"/>
<dbReference type="SMR" id="P56528"/>
<dbReference type="BioGRID" id="198590">
    <property type="interactions" value="1"/>
</dbReference>
<dbReference type="DIP" id="DIP-59864N"/>
<dbReference type="FunCoup" id="P56528">
    <property type="interactions" value="808"/>
</dbReference>
<dbReference type="STRING" id="10090.ENSMUSP00000030964"/>
<dbReference type="BindingDB" id="P56528"/>
<dbReference type="ChEMBL" id="CHEMBL3425388"/>
<dbReference type="GlyConnect" id="2113">
    <property type="glycosylation" value="9 N-Linked glycans (3 sites)"/>
</dbReference>
<dbReference type="GlyCosmos" id="P56528">
    <property type="glycosylation" value="4 sites, 8 glycans"/>
</dbReference>
<dbReference type="GlyGen" id="P56528">
    <property type="glycosylation" value="5 sites, 10 N-linked glycans (4 sites), 1 O-linked glycan (1 site)"/>
</dbReference>
<dbReference type="iPTMnet" id="P56528"/>
<dbReference type="PhosphoSitePlus" id="P56528"/>
<dbReference type="SwissPalm" id="P56528"/>
<dbReference type="jPOST" id="P56528"/>
<dbReference type="PaxDb" id="10090-ENSMUSP00000030964"/>
<dbReference type="PeptideAtlas" id="P56528"/>
<dbReference type="ProteomicsDB" id="280023"/>
<dbReference type="Antibodypedia" id="9844">
    <property type="antibodies" value="2898 antibodies from 55 providers"/>
</dbReference>
<dbReference type="DNASU" id="12494"/>
<dbReference type="Ensembl" id="ENSMUST00000030964.6">
    <property type="protein sequence ID" value="ENSMUSP00000030964.5"/>
    <property type="gene ID" value="ENSMUSG00000029084.6"/>
</dbReference>
<dbReference type="GeneID" id="12494"/>
<dbReference type="KEGG" id="mmu:12494"/>
<dbReference type="UCSC" id="uc008xic.2">
    <property type="organism name" value="mouse"/>
</dbReference>
<dbReference type="AGR" id="MGI:107474"/>
<dbReference type="CTD" id="952"/>
<dbReference type="MGI" id="MGI:107474">
    <property type="gene designation" value="Cd38"/>
</dbReference>
<dbReference type="VEuPathDB" id="HostDB:ENSMUSG00000029084"/>
<dbReference type="eggNOG" id="ENOG502S1HV">
    <property type="taxonomic scope" value="Eukaryota"/>
</dbReference>
<dbReference type="GeneTree" id="ENSGT00390000017291"/>
<dbReference type="HOGENOM" id="CLU_067834_0_1_1"/>
<dbReference type="InParanoid" id="P56528"/>
<dbReference type="OMA" id="SCQTCAN"/>
<dbReference type="OrthoDB" id="10028716at2759"/>
<dbReference type="PhylomeDB" id="P56528"/>
<dbReference type="TreeFam" id="TF332530"/>
<dbReference type="BRENDA" id="2.4.99.20">
    <property type="organism ID" value="3474"/>
</dbReference>
<dbReference type="BRENDA" id="3.2.2.6">
    <property type="organism ID" value="3474"/>
</dbReference>
<dbReference type="Reactome" id="R-MMU-196807">
    <property type="pathway name" value="Nicotinate metabolism"/>
</dbReference>
<dbReference type="BioGRID-ORCS" id="12494">
    <property type="hits" value="1 hit in 80 CRISPR screens"/>
</dbReference>
<dbReference type="ChiTaRS" id="Cd38">
    <property type="organism name" value="mouse"/>
</dbReference>
<dbReference type="EvolutionaryTrace" id="P56528"/>
<dbReference type="PRO" id="PR:P56528"/>
<dbReference type="Proteomes" id="UP000000589">
    <property type="component" value="Chromosome 5"/>
</dbReference>
<dbReference type="RNAct" id="P56528">
    <property type="molecule type" value="protein"/>
</dbReference>
<dbReference type="Bgee" id="ENSMUSG00000029084">
    <property type="expression patterns" value="Expressed in stroma of bone marrow and 210 other cell types or tissues"/>
</dbReference>
<dbReference type="ExpressionAtlas" id="P56528">
    <property type="expression patterns" value="baseline and differential"/>
</dbReference>
<dbReference type="GO" id="GO:0009986">
    <property type="term" value="C:cell surface"/>
    <property type="evidence" value="ECO:0000314"/>
    <property type="project" value="MGI"/>
</dbReference>
<dbReference type="GO" id="GO:0016020">
    <property type="term" value="C:membrane"/>
    <property type="evidence" value="ECO:0000314"/>
    <property type="project" value="MGI"/>
</dbReference>
<dbReference type="GO" id="GO:0005886">
    <property type="term" value="C:plasma membrane"/>
    <property type="evidence" value="ECO:0007669"/>
    <property type="project" value="Ensembl"/>
</dbReference>
<dbReference type="GO" id="GO:0016798">
    <property type="term" value="F:hydrolase activity, acting on glycosyl bonds"/>
    <property type="evidence" value="ECO:0000315"/>
    <property type="project" value="MGI"/>
</dbReference>
<dbReference type="GO" id="GO:0042802">
    <property type="term" value="F:identical protein binding"/>
    <property type="evidence" value="ECO:0000353"/>
    <property type="project" value="IntAct"/>
</dbReference>
<dbReference type="GO" id="GO:0061809">
    <property type="term" value="F:NAD+ nucleosidase activity, cyclic ADP-ribose generating"/>
    <property type="evidence" value="ECO:0007669"/>
    <property type="project" value="UniProtKB-EC"/>
</dbReference>
<dbReference type="GO" id="GO:0016849">
    <property type="term" value="F:phosphorus-oxygen lyase activity"/>
    <property type="evidence" value="ECO:0000315"/>
    <property type="project" value="MGI"/>
</dbReference>
<dbReference type="GO" id="GO:0016740">
    <property type="term" value="F:transferase activity"/>
    <property type="evidence" value="ECO:0007669"/>
    <property type="project" value="UniProtKB-KW"/>
</dbReference>
<dbReference type="GO" id="GO:0042100">
    <property type="term" value="P:B cell proliferation"/>
    <property type="evidence" value="ECO:0000314"/>
    <property type="project" value="MGI"/>
</dbReference>
<dbReference type="GO" id="GO:0050853">
    <property type="term" value="P:B cell receptor signaling pathway"/>
    <property type="evidence" value="ECO:0007669"/>
    <property type="project" value="Ensembl"/>
</dbReference>
<dbReference type="GO" id="GO:0043066">
    <property type="term" value="P:negative regulation of apoptotic process"/>
    <property type="evidence" value="ECO:0007669"/>
    <property type="project" value="Ensembl"/>
</dbReference>
<dbReference type="GO" id="GO:0045892">
    <property type="term" value="P:negative regulation of DNA-templated transcription"/>
    <property type="evidence" value="ECO:0007669"/>
    <property type="project" value="Ensembl"/>
</dbReference>
<dbReference type="GO" id="GO:0030890">
    <property type="term" value="P:positive regulation of B cell proliferation"/>
    <property type="evidence" value="ECO:0000314"/>
    <property type="project" value="MGI"/>
</dbReference>
<dbReference type="GO" id="GO:0045893">
    <property type="term" value="P:positive regulation of DNA-templated transcription"/>
    <property type="evidence" value="ECO:0007669"/>
    <property type="project" value="Ensembl"/>
</dbReference>
<dbReference type="GO" id="GO:0009410">
    <property type="term" value="P:response to xenobiotic stimulus"/>
    <property type="evidence" value="ECO:0007669"/>
    <property type="project" value="Ensembl"/>
</dbReference>
<dbReference type="CDD" id="cd04759">
    <property type="entry name" value="Rib_hydrolase"/>
    <property type="match status" value="1"/>
</dbReference>
<dbReference type="Gene3D" id="1.20.82.10">
    <property type="entry name" value="ADP Ribosyl Cyclase, Chain A, domain 1"/>
    <property type="match status" value="1"/>
</dbReference>
<dbReference type="Gene3D" id="3.40.50.720">
    <property type="entry name" value="NAD(P)-binding Rossmann-like Domain"/>
    <property type="match status" value="1"/>
</dbReference>
<dbReference type="InterPro" id="IPR003193">
    <property type="entry name" value="ADP-ribosyl_cyclase"/>
</dbReference>
<dbReference type="PANTHER" id="PTHR10912">
    <property type="entry name" value="ADP-RIBOSYL CYCLASE"/>
    <property type="match status" value="1"/>
</dbReference>
<dbReference type="PANTHER" id="PTHR10912:SF5">
    <property type="entry name" value="ADP-RIBOSYL CYCLASE_CYCLIC ADP-RIBOSE HYDROLASE 1"/>
    <property type="match status" value="1"/>
</dbReference>
<dbReference type="Pfam" id="PF02267">
    <property type="entry name" value="Rib_hydrolayse"/>
    <property type="match status" value="1"/>
</dbReference>
<dbReference type="SUPFAM" id="SSF52309">
    <property type="entry name" value="N-(deoxy)ribosyltransferase-like"/>
    <property type="match status" value="1"/>
</dbReference>
<feature type="chain" id="PRO_0000144068" description="ADP-ribosyl cyclase/cyclic ADP-ribose hydrolase 1">
    <location>
        <begin position="1"/>
        <end position="304"/>
    </location>
</feature>
<feature type="topological domain" description="Cytoplasmic" evidence="3">
    <location>
        <begin position="1"/>
        <end position="21"/>
    </location>
</feature>
<feature type="transmembrane region" description="Helical; Signal-anchor for type II membrane protein" evidence="3">
    <location>
        <begin position="22"/>
        <end position="44"/>
    </location>
</feature>
<feature type="topological domain" description="Extracellular" evidence="3">
    <location>
        <begin position="45"/>
        <end position="304"/>
    </location>
</feature>
<feature type="active site" evidence="1">
    <location>
        <position position="123"/>
    </location>
</feature>
<feature type="active site" evidence="1">
    <location>
        <position position="205"/>
    </location>
</feature>
<feature type="glycosylation site" description="N-linked (GlcNAc...) asparagine" evidence="3">
    <location>
        <position position="104"/>
    </location>
</feature>
<feature type="glycosylation site" description="N-linked (GlcNAc...) asparagine" evidence="3">
    <location>
        <position position="124"/>
    </location>
</feature>
<feature type="glycosylation site" description="N-linked (GlcNAc...) asparagine" evidence="3">
    <location>
        <position position="213"/>
    </location>
</feature>
<feature type="glycosylation site" description="N-linked (GlcNAc...) asparagine" evidence="3">
    <location>
        <position position="223"/>
    </location>
</feature>
<feature type="disulfide bond" evidence="5">
    <location>
        <begin position="70"/>
        <end position="86"/>
    </location>
</feature>
<feature type="disulfide bond" evidence="5">
    <location>
        <begin position="103"/>
        <end position="184"/>
    </location>
</feature>
<feature type="disulfide bond" evidence="5">
    <location>
        <begin position="164"/>
        <end position="177"/>
    </location>
</feature>
<feature type="disulfide bond" evidence="5">
    <location>
        <begin position="258"/>
        <end position="279"/>
    </location>
</feature>
<feature type="disulfide bond" evidence="5">
    <location>
        <begin position="291"/>
        <end position="300"/>
    </location>
</feature>
<feature type="sequence conflict" description="In Ref. 1; AAA03163." evidence="7" ref="1">
    <original>V</original>
    <variation>M</variation>
    <location>
        <position position="191"/>
    </location>
</feature>
<feature type="sequence conflict" description="In Ref. 1; AAA03163." evidence="7" ref="1">
    <original>V</original>
    <variation>L</variation>
    <location>
        <position position="229"/>
    </location>
</feature>
<feature type="helix" evidence="10">
    <location>
        <begin position="62"/>
        <end position="75"/>
    </location>
</feature>
<feature type="helix" evidence="10">
    <location>
        <begin position="79"/>
        <end position="81"/>
    </location>
</feature>
<feature type="helix" evidence="10">
    <location>
        <begin position="86"/>
        <end position="97"/>
    </location>
</feature>
<feature type="helix" evidence="10">
    <location>
        <begin position="107"/>
        <end position="110"/>
    </location>
</feature>
<feature type="helix" evidence="10">
    <location>
        <begin position="111"/>
        <end position="116"/>
    </location>
</feature>
<feature type="helix" evidence="10">
    <location>
        <begin position="149"/>
        <end position="151"/>
    </location>
</feature>
<feature type="helix" evidence="10">
    <location>
        <begin position="153"/>
        <end position="158"/>
    </location>
</feature>
<feature type="helix" evidence="10">
    <location>
        <begin position="188"/>
        <end position="203"/>
    </location>
</feature>
<feature type="strand" evidence="10">
    <location>
        <begin position="206"/>
        <end position="219"/>
    </location>
</feature>
<feature type="helix" evidence="10">
    <location>
        <begin position="225"/>
        <end position="228"/>
    </location>
</feature>
<feature type="helix" evidence="10">
    <location>
        <begin position="230"/>
        <end position="233"/>
    </location>
</feature>
<feature type="turn" evidence="10">
    <location>
        <begin position="236"/>
        <end position="238"/>
    </location>
</feature>
<feature type="strand" evidence="10">
    <location>
        <begin position="239"/>
        <end position="247"/>
    </location>
</feature>
<feature type="strand" evidence="10">
    <location>
        <begin position="250"/>
        <end position="252"/>
    </location>
</feature>
<feature type="helix" evidence="10">
    <location>
        <begin position="257"/>
        <end position="259"/>
    </location>
</feature>
<feature type="helix" evidence="10">
    <location>
        <begin position="261"/>
        <end position="271"/>
    </location>
</feature>
<feature type="turn" evidence="10">
    <location>
        <begin position="272"/>
        <end position="274"/>
    </location>
</feature>
<feature type="strand" evidence="10">
    <location>
        <begin position="276"/>
        <end position="282"/>
    </location>
</feature>
<name>CD38_MOUSE</name>
<reference key="1">
    <citation type="journal article" date="1993" name="J. Immunol.">
        <title>Expression cloning of a cDNA encoding a novel murine B cell activation marker. Homology to human CD38.</title>
        <authorList>
            <person name="Harada N."/>
            <person name="Santos-Argumedo L."/>
            <person name="Chang R."/>
            <person name="Grimaldi J.C."/>
            <person name="Lund F.E."/>
            <person name="Brannan C.I."/>
            <person name="Copeland N.G."/>
            <person name="Jenkins N.A."/>
            <person name="Heath A.W."/>
            <person name="Parkhouse R.M.E."/>
            <person name="Howard M."/>
        </authorList>
    </citation>
    <scope>NUCLEOTIDE SEQUENCE [MRNA]</scope>
    <source>
        <tissue>B-cell</tissue>
    </source>
</reference>
<reference key="2">
    <citation type="journal article" date="2005" name="Science">
        <title>The transcriptional landscape of the mammalian genome.</title>
        <authorList>
            <person name="Carninci P."/>
            <person name="Kasukawa T."/>
            <person name="Katayama S."/>
            <person name="Gough J."/>
            <person name="Frith M.C."/>
            <person name="Maeda N."/>
            <person name="Oyama R."/>
            <person name="Ravasi T."/>
            <person name="Lenhard B."/>
            <person name="Wells C."/>
            <person name="Kodzius R."/>
            <person name="Shimokawa K."/>
            <person name="Bajic V.B."/>
            <person name="Brenner S.E."/>
            <person name="Batalov S."/>
            <person name="Forrest A.R."/>
            <person name="Zavolan M."/>
            <person name="Davis M.J."/>
            <person name="Wilming L.G."/>
            <person name="Aidinis V."/>
            <person name="Allen J.E."/>
            <person name="Ambesi-Impiombato A."/>
            <person name="Apweiler R."/>
            <person name="Aturaliya R.N."/>
            <person name="Bailey T.L."/>
            <person name="Bansal M."/>
            <person name="Baxter L."/>
            <person name="Beisel K.W."/>
            <person name="Bersano T."/>
            <person name="Bono H."/>
            <person name="Chalk A.M."/>
            <person name="Chiu K.P."/>
            <person name="Choudhary V."/>
            <person name="Christoffels A."/>
            <person name="Clutterbuck D.R."/>
            <person name="Crowe M.L."/>
            <person name="Dalla E."/>
            <person name="Dalrymple B.P."/>
            <person name="de Bono B."/>
            <person name="Della Gatta G."/>
            <person name="di Bernardo D."/>
            <person name="Down T."/>
            <person name="Engstrom P."/>
            <person name="Fagiolini M."/>
            <person name="Faulkner G."/>
            <person name="Fletcher C.F."/>
            <person name="Fukushima T."/>
            <person name="Furuno M."/>
            <person name="Futaki S."/>
            <person name="Gariboldi M."/>
            <person name="Georgii-Hemming P."/>
            <person name="Gingeras T.R."/>
            <person name="Gojobori T."/>
            <person name="Green R.E."/>
            <person name="Gustincich S."/>
            <person name="Harbers M."/>
            <person name="Hayashi Y."/>
            <person name="Hensch T.K."/>
            <person name="Hirokawa N."/>
            <person name="Hill D."/>
            <person name="Huminiecki L."/>
            <person name="Iacono M."/>
            <person name="Ikeo K."/>
            <person name="Iwama A."/>
            <person name="Ishikawa T."/>
            <person name="Jakt M."/>
            <person name="Kanapin A."/>
            <person name="Katoh M."/>
            <person name="Kawasawa Y."/>
            <person name="Kelso J."/>
            <person name="Kitamura H."/>
            <person name="Kitano H."/>
            <person name="Kollias G."/>
            <person name="Krishnan S.P."/>
            <person name="Kruger A."/>
            <person name="Kummerfeld S.K."/>
            <person name="Kurochkin I.V."/>
            <person name="Lareau L.F."/>
            <person name="Lazarevic D."/>
            <person name="Lipovich L."/>
            <person name="Liu J."/>
            <person name="Liuni S."/>
            <person name="McWilliam S."/>
            <person name="Madan Babu M."/>
            <person name="Madera M."/>
            <person name="Marchionni L."/>
            <person name="Matsuda H."/>
            <person name="Matsuzawa S."/>
            <person name="Miki H."/>
            <person name="Mignone F."/>
            <person name="Miyake S."/>
            <person name="Morris K."/>
            <person name="Mottagui-Tabar S."/>
            <person name="Mulder N."/>
            <person name="Nakano N."/>
            <person name="Nakauchi H."/>
            <person name="Ng P."/>
            <person name="Nilsson R."/>
            <person name="Nishiguchi S."/>
            <person name="Nishikawa S."/>
            <person name="Nori F."/>
            <person name="Ohara O."/>
            <person name="Okazaki Y."/>
            <person name="Orlando V."/>
            <person name="Pang K.C."/>
            <person name="Pavan W.J."/>
            <person name="Pavesi G."/>
            <person name="Pesole G."/>
            <person name="Petrovsky N."/>
            <person name="Piazza S."/>
            <person name="Reed J."/>
            <person name="Reid J.F."/>
            <person name="Ring B.Z."/>
            <person name="Ringwald M."/>
            <person name="Rost B."/>
            <person name="Ruan Y."/>
            <person name="Salzberg S.L."/>
            <person name="Sandelin A."/>
            <person name="Schneider C."/>
            <person name="Schoenbach C."/>
            <person name="Sekiguchi K."/>
            <person name="Semple C.A."/>
            <person name="Seno S."/>
            <person name="Sessa L."/>
            <person name="Sheng Y."/>
            <person name="Shibata Y."/>
            <person name="Shimada H."/>
            <person name="Shimada K."/>
            <person name="Silva D."/>
            <person name="Sinclair B."/>
            <person name="Sperling S."/>
            <person name="Stupka E."/>
            <person name="Sugiura K."/>
            <person name="Sultana R."/>
            <person name="Takenaka Y."/>
            <person name="Taki K."/>
            <person name="Tammoja K."/>
            <person name="Tan S.L."/>
            <person name="Tang S."/>
            <person name="Taylor M.S."/>
            <person name="Tegner J."/>
            <person name="Teichmann S.A."/>
            <person name="Ueda H.R."/>
            <person name="van Nimwegen E."/>
            <person name="Verardo R."/>
            <person name="Wei C.L."/>
            <person name="Yagi K."/>
            <person name="Yamanishi H."/>
            <person name="Zabarovsky E."/>
            <person name="Zhu S."/>
            <person name="Zimmer A."/>
            <person name="Hide W."/>
            <person name="Bult C."/>
            <person name="Grimmond S.M."/>
            <person name="Teasdale R.D."/>
            <person name="Liu E.T."/>
            <person name="Brusic V."/>
            <person name="Quackenbush J."/>
            <person name="Wahlestedt C."/>
            <person name="Mattick J.S."/>
            <person name="Hume D.A."/>
            <person name="Kai C."/>
            <person name="Sasaki D."/>
            <person name="Tomaru Y."/>
            <person name="Fukuda S."/>
            <person name="Kanamori-Katayama M."/>
            <person name="Suzuki M."/>
            <person name="Aoki J."/>
            <person name="Arakawa T."/>
            <person name="Iida J."/>
            <person name="Imamura K."/>
            <person name="Itoh M."/>
            <person name="Kato T."/>
            <person name="Kawaji H."/>
            <person name="Kawagashira N."/>
            <person name="Kawashima T."/>
            <person name="Kojima M."/>
            <person name="Kondo S."/>
            <person name="Konno H."/>
            <person name="Nakano K."/>
            <person name="Ninomiya N."/>
            <person name="Nishio T."/>
            <person name="Okada M."/>
            <person name="Plessy C."/>
            <person name="Shibata K."/>
            <person name="Shiraki T."/>
            <person name="Suzuki S."/>
            <person name="Tagami M."/>
            <person name="Waki K."/>
            <person name="Watahiki A."/>
            <person name="Okamura-Oho Y."/>
            <person name="Suzuki H."/>
            <person name="Kawai J."/>
            <person name="Hayashizaki Y."/>
        </authorList>
    </citation>
    <scope>NUCLEOTIDE SEQUENCE [LARGE SCALE MRNA]</scope>
    <source>
        <strain>C57BL/6J</strain>
        <tissue>Cerebellum</tissue>
        <tissue>Hypothalamus</tissue>
        <tissue>Thymus</tissue>
    </source>
</reference>
<reference key="3">
    <citation type="journal article" date="2004" name="Genome Res.">
        <title>The status, quality, and expansion of the NIH full-length cDNA project: the Mammalian Gene Collection (MGC).</title>
        <authorList>
            <consortium name="The MGC Project Team"/>
        </authorList>
    </citation>
    <scope>NUCLEOTIDE SEQUENCE [LARGE SCALE MRNA]</scope>
    <source>
        <tissue>Olfactory epithelium</tissue>
    </source>
</reference>
<reference key="4">
    <citation type="journal article" date="2002" name="Biochem. J.">
        <title>CD38 is the major enzyme responsible for synthesis of nicotinic acid-adenine dinucleotide phosphate in mammalian tissues.</title>
        <authorList>
            <person name="Chini E.N."/>
            <person name="Chini C.C."/>
            <person name="Kato I."/>
            <person name="Takasawa S."/>
            <person name="Okamoto H."/>
        </authorList>
    </citation>
    <scope>FUNCTION IN SYNTHESIS OF CYCLIC ADP-RIBOSE AND NICOTINIC ACID-ADENINE DINUCLEOTIDE PHOSPHATE</scope>
    <scope>SUBCELLULAR LOCATION</scope>
    <scope>DISRUPTION PHENOTYPE</scope>
</reference>
<reference key="5">
    <citation type="journal article" date="2010" name="Cell">
        <title>A tissue-specific atlas of mouse protein phosphorylation and expression.</title>
        <authorList>
            <person name="Huttlin E.L."/>
            <person name="Jedrychowski M.P."/>
            <person name="Elias J.E."/>
            <person name="Goswami T."/>
            <person name="Rad R."/>
            <person name="Beausoleil S.A."/>
            <person name="Villen J."/>
            <person name="Haas W."/>
            <person name="Sowa M.E."/>
            <person name="Gygi S.P."/>
        </authorList>
    </citation>
    <scope>IDENTIFICATION BY MASS SPECTROMETRY [LARGE SCALE ANALYSIS]</scope>
    <source>
        <tissue>Brain</tissue>
        <tissue>Brown adipose tissue</tissue>
        <tissue>Heart</tissue>
        <tissue>Kidney</tissue>
        <tissue>Liver</tissue>
        <tissue>Lung</tissue>
        <tissue>Spleen</tissue>
    </source>
</reference>
<reference key="6">
    <citation type="submission" date="2009-02" db="PDB data bank">
        <title>Crystal structure of the truncated extracellular domain of mouse Cd38.</title>
        <authorList>
            <consortium name="RIKEN structural genomics initiative (RSGI)"/>
        </authorList>
    </citation>
    <scope>X-RAY CRYSTALLOGRAPHY (2.8 ANGSTROMS) OF 48-288</scope>
    <scope>DISULFIDE BONDS</scope>
</reference>
<protein>
    <recommendedName>
        <fullName>ADP-ribosyl cyclase/cyclic ADP-ribose hydrolase 1</fullName>
        <ecNumber evidence="4">3.2.2.-</ecNumber>
        <ecNumber>3.2.2.6</ecNumber>
    </recommendedName>
    <alternativeName>
        <fullName>2'-phospho-ADP-ribosyl cyclase</fullName>
    </alternativeName>
    <alternativeName>
        <fullName>2'-phospho-ADP-ribosyl cyclase/2'-phospho-cyclic-ADP-ribose transferase</fullName>
        <ecNumber evidence="4">2.4.99.20</ecNumber>
    </alternativeName>
    <alternativeName>
        <fullName>2'-phospho-cyclic-ADP-ribose transferase</fullName>
    </alternativeName>
    <alternativeName>
        <fullName>ADP-ribosyl cyclase 1</fullName>
        <shortName>ADPRC 1</shortName>
    </alternativeName>
    <alternativeName>
        <fullName>Cyclic ADP-ribose hydrolase 1</fullName>
        <shortName>cADPR hydrolase 1</shortName>
    </alternativeName>
    <alternativeName>
        <fullName>I-19</fullName>
    </alternativeName>
    <alternativeName>
        <fullName evidence="6">NIM-R5 antigen</fullName>
    </alternativeName>
    <cdAntigenName>CD38</cdAntigenName>
</protein>
<sequence>MANYEFSQVSGDRPGCRLSRKAQIGLGVGLLVLIALVVGIVVILLRPRSLLVWTGEPTTKHFSDIFLGRCLIYTQILRPEMRDQNCQEILSTFKGAFVSKNPCNITREDYAPLVKLVTQTIPCNKTLFWSKSKHLAHQYTWIQGKMFTLEDTLLGYIADDLRWCGDPSTSDMNYVSCPHWSENCPNNPITVFWKVISQKFAEDACGVVQVMLNGSLREPFYKNSTFGSVEVFSLDPNKVHKLQAWVMHDIEGASSNACSSSSLNELKMIVQKRNMIFACVDNYRPARFLQCVKNPEHPSCRLNT</sequence>
<accession>P56528</accession>
<accession>Q8BFY8</accession>
<proteinExistence type="evidence at protein level"/>
<evidence type="ECO:0000250" key="1"/>
<evidence type="ECO:0000250" key="2">
    <source>
        <dbReference type="UniProtKB" id="P28907"/>
    </source>
</evidence>
<evidence type="ECO:0000255" key="3"/>
<evidence type="ECO:0000269" key="4">
    <source>
    </source>
</evidence>
<evidence type="ECO:0000269" key="5">
    <source ref="6"/>
</evidence>
<evidence type="ECO:0000303" key="6">
    <source>
    </source>
</evidence>
<evidence type="ECO:0000305" key="7"/>
<evidence type="ECO:0000305" key="8">
    <source>
    </source>
</evidence>
<evidence type="ECO:0000305" key="9">
    <source>
    </source>
</evidence>
<evidence type="ECO:0007829" key="10">
    <source>
        <dbReference type="PDB" id="2EG9"/>
    </source>
</evidence>